<comment type="subcellular location">
    <subcellularLocation>
        <location evidence="1">Nucleus</location>
        <location evidence="1">Nucleolus</location>
    </subcellularLocation>
</comment>
<comment type="similarity">
    <text evidence="3">Belongs to the PNO1 family.</text>
</comment>
<keyword id="KW-0539">Nucleus</keyword>
<keyword id="KW-1185">Reference proteome</keyword>
<keyword id="KW-0694">RNA-binding</keyword>
<dbReference type="EMBL" id="DQ066198">
    <property type="protein sequence ID" value="AAY66835.1"/>
    <property type="molecule type" value="mRNA"/>
</dbReference>
<dbReference type="SMR" id="Q4PMC9"/>
<dbReference type="FunCoup" id="Q4PMC9">
    <property type="interactions" value="956"/>
</dbReference>
<dbReference type="VEuPathDB" id="VectorBase:ISCI023560"/>
<dbReference type="VEuPathDB" id="VectorBase:ISCP_020554"/>
<dbReference type="VEuPathDB" id="VectorBase:ISCW023560"/>
<dbReference type="HOGENOM" id="CLU_064992_2_0_1"/>
<dbReference type="InParanoid" id="Q4PMC9"/>
<dbReference type="OrthoDB" id="1932641at2759"/>
<dbReference type="Proteomes" id="UP000001555">
    <property type="component" value="Unplaced"/>
</dbReference>
<dbReference type="GO" id="GO:0005730">
    <property type="term" value="C:nucleolus"/>
    <property type="evidence" value="ECO:0000250"/>
    <property type="project" value="UniProtKB"/>
</dbReference>
<dbReference type="GO" id="GO:0005634">
    <property type="term" value="C:nucleus"/>
    <property type="evidence" value="ECO:0000318"/>
    <property type="project" value="GO_Central"/>
</dbReference>
<dbReference type="GO" id="GO:0003723">
    <property type="term" value="F:RNA binding"/>
    <property type="evidence" value="ECO:0007669"/>
    <property type="project" value="UniProtKB-KW"/>
</dbReference>
<dbReference type="GO" id="GO:0042254">
    <property type="term" value="P:ribosome biogenesis"/>
    <property type="evidence" value="ECO:0007669"/>
    <property type="project" value="UniProtKB-ARBA"/>
</dbReference>
<dbReference type="CDD" id="cd22391">
    <property type="entry name" value="KH-I_PNO1_rpt1"/>
    <property type="match status" value="1"/>
</dbReference>
<dbReference type="CDD" id="cd22392">
    <property type="entry name" value="KH-I_PNO1_rpt2"/>
    <property type="match status" value="1"/>
</dbReference>
<dbReference type="FunFam" id="3.30.1370.10:FF:000009">
    <property type="entry name" value="RNA-binding protein PNO1"/>
    <property type="match status" value="1"/>
</dbReference>
<dbReference type="FunFam" id="3.30.1370.10:FF:000048">
    <property type="entry name" value="RNA-binding protein PNO1 isoform X2"/>
    <property type="match status" value="1"/>
</dbReference>
<dbReference type="Gene3D" id="3.30.1370.10">
    <property type="entry name" value="K Homology domain, type 1"/>
    <property type="match status" value="2"/>
</dbReference>
<dbReference type="InterPro" id="IPR055212">
    <property type="entry name" value="KH-I_PNO1_first"/>
</dbReference>
<dbReference type="InterPro" id="IPR036612">
    <property type="entry name" value="KH_dom_type_1_sf"/>
</dbReference>
<dbReference type="InterPro" id="IPR055211">
    <property type="entry name" value="KH_PNO1_2nd"/>
</dbReference>
<dbReference type="InterPro" id="IPR041174">
    <property type="entry name" value="KRR1-like_KH1"/>
</dbReference>
<dbReference type="PANTHER" id="PTHR12826">
    <property type="entry name" value="RIBONUCLEASE Y"/>
    <property type="match status" value="1"/>
</dbReference>
<dbReference type="PANTHER" id="PTHR12826:SF13">
    <property type="entry name" value="RNA-BINDING PROTEIN PNO1"/>
    <property type="match status" value="1"/>
</dbReference>
<dbReference type="Pfam" id="PF17903">
    <property type="entry name" value="KH_KRR1_1st"/>
    <property type="match status" value="1"/>
</dbReference>
<dbReference type="Pfam" id="PF22891">
    <property type="entry name" value="KH_PNO1_2nd"/>
    <property type="match status" value="1"/>
</dbReference>
<dbReference type="SUPFAM" id="SSF54791">
    <property type="entry name" value="Eukaryotic type KH-domain (KH-domain type I)"/>
    <property type="match status" value="1"/>
</dbReference>
<name>PNO1_IXOSC</name>
<protein>
    <recommendedName>
        <fullName>RNA-binding protein pno1</fullName>
    </recommendedName>
</protein>
<proteinExistence type="evidence at transcript level"/>
<organism>
    <name type="scientific">Ixodes scapularis</name>
    <name type="common">Black-legged tick</name>
    <name type="synonym">Deer tick</name>
    <dbReference type="NCBI Taxonomy" id="6945"/>
    <lineage>
        <taxon>Eukaryota</taxon>
        <taxon>Metazoa</taxon>
        <taxon>Ecdysozoa</taxon>
        <taxon>Arthropoda</taxon>
        <taxon>Chelicerata</taxon>
        <taxon>Arachnida</taxon>
        <taxon>Acari</taxon>
        <taxon>Parasitiformes</taxon>
        <taxon>Ixodida</taxon>
        <taxon>Ixodoidea</taxon>
        <taxon>Ixodidae</taxon>
        <taxon>Ixodinae</taxon>
        <taxon>Ixodes</taxon>
    </lineage>
</organism>
<reference key="1">
    <citation type="journal article" date="2006" name="Insect Biochem. Mol. Biol.">
        <title>An annotated catalog of salivary gland transcripts from Ixodes scapularis ticks.</title>
        <authorList>
            <person name="Ribeiro J.M.C."/>
            <person name="Alarcon-Chaidez F."/>
            <person name="Francischetti I.M.B."/>
            <person name="Mans B.J."/>
            <person name="Mather T.N."/>
            <person name="Valenzuela J.G."/>
            <person name="Wikel S.K."/>
        </authorList>
    </citation>
    <scope>NUCLEOTIDE SEQUENCE [LARGE SCALE MRNA]</scope>
    <source>
        <strain>ISUFL74</strain>
        <tissue>Salivary gland</tissue>
    </source>
</reference>
<accession>Q4PMC9</accession>
<evidence type="ECO:0000250" key="1"/>
<evidence type="ECO:0000256" key="2">
    <source>
        <dbReference type="SAM" id="MobiDB-lite"/>
    </source>
</evidence>
<evidence type="ECO:0000305" key="3"/>
<feature type="chain" id="PRO_0000270552" description="RNA-binding protein pno1">
    <location>
        <begin position="1"/>
        <end position="234"/>
    </location>
</feature>
<feature type="domain" description="KH">
    <location>
        <begin position="158"/>
        <end position="207"/>
    </location>
</feature>
<feature type="region of interest" description="Disordered" evidence="2">
    <location>
        <begin position="1"/>
        <end position="39"/>
    </location>
</feature>
<sequence>MPTQDSAAKQADDGFQLVQKKSRKRKMTMDMDDADPKAGAVVYPPAKQEKLEGKGELRRIAVPAHRYTPLKDNWLKIFTPVVEHLHLQIRFNLKSRCVEIRTCKETEEPSALQKAADFVRAFTLGFEVDDALALVRLDELFLESFDVQDVKPLKGDHLARCIGRLAGKGGRTKFTIENVTKTRIVLADSKVHILGSYQNIRAARTALCNLVLGKPPSKVYGTMRQLASRIGERF</sequence>